<dbReference type="EC" id="2.2.1.6"/>
<dbReference type="EMBL" id="AE017341">
    <property type="protein sequence ID" value="AAW40825.1"/>
    <property type="molecule type" value="Genomic_DNA"/>
</dbReference>
<dbReference type="RefSeq" id="XP_566644.1">
    <property type="nucleotide sequence ID" value="XM_566644.1"/>
</dbReference>
<dbReference type="SMR" id="Q5KPJ5"/>
<dbReference type="FunCoup" id="Q5KPJ5">
    <property type="interactions" value="143"/>
</dbReference>
<dbReference type="STRING" id="214684.Q5KPJ5"/>
<dbReference type="PaxDb" id="214684-Q5KPJ5"/>
<dbReference type="EnsemblFungi" id="AAW40825">
    <property type="protein sequence ID" value="AAW40825"/>
    <property type="gene ID" value="CNA02570"/>
</dbReference>
<dbReference type="GeneID" id="3253594"/>
<dbReference type="KEGG" id="cne:CNA02570"/>
<dbReference type="VEuPathDB" id="FungiDB:CNA02570"/>
<dbReference type="eggNOG" id="KOG4166">
    <property type="taxonomic scope" value="Eukaryota"/>
</dbReference>
<dbReference type="HOGENOM" id="CLU_013748_1_2_1"/>
<dbReference type="InParanoid" id="Q5KPJ5"/>
<dbReference type="OMA" id="QETDMIG"/>
<dbReference type="OrthoDB" id="16262at2759"/>
<dbReference type="UniPathway" id="UPA00047">
    <property type="reaction ID" value="UER00055"/>
</dbReference>
<dbReference type="UniPathway" id="UPA00049">
    <property type="reaction ID" value="UER00059"/>
</dbReference>
<dbReference type="Proteomes" id="UP000002149">
    <property type="component" value="Chromosome 1"/>
</dbReference>
<dbReference type="GO" id="GO:0005948">
    <property type="term" value="C:acetolactate synthase complex"/>
    <property type="evidence" value="ECO:0000318"/>
    <property type="project" value="GO_Central"/>
</dbReference>
<dbReference type="GO" id="GO:0005739">
    <property type="term" value="C:mitochondrion"/>
    <property type="evidence" value="ECO:0007669"/>
    <property type="project" value="UniProtKB-SubCell"/>
</dbReference>
<dbReference type="GO" id="GO:0003984">
    <property type="term" value="F:acetolactate synthase activity"/>
    <property type="evidence" value="ECO:0000318"/>
    <property type="project" value="GO_Central"/>
</dbReference>
<dbReference type="GO" id="GO:0050660">
    <property type="term" value="F:flavin adenine dinucleotide binding"/>
    <property type="evidence" value="ECO:0000318"/>
    <property type="project" value="GO_Central"/>
</dbReference>
<dbReference type="GO" id="GO:0000287">
    <property type="term" value="F:magnesium ion binding"/>
    <property type="evidence" value="ECO:0007669"/>
    <property type="project" value="InterPro"/>
</dbReference>
<dbReference type="GO" id="GO:0030976">
    <property type="term" value="F:thiamine pyrophosphate binding"/>
    <property type="evidence" value="ECO:0007669"/>
    <property type="project" value="InterPro"/>
</dbReference>
<dbReference type="GO" id="GO:0009097">
    <property type="term" value="P:isoleucine biosynthetic process"/>
    <property type="evidence" value="ECO:0000318"/>
    <property type="project" value="GO_Central"/>
</dbReference>
<dbReference type="GO" id="GO:0009099">
    <property type="term" value="P:L-valine biosynthetic process"/>
    <property type="evidence" value="ECO:0000318"/>
    <property type="project" value="GO_Central"/>
</dbReference>
<dbReference type="CDD" id="cd02015">
    <property type="entry name" value="TPP_AHAS"/>
    <property type="match status" value="1"/>
</dbReference>
<dbReference type="CDD" id="cd07035">
    <property type="entry name" value="TPP_PYR_POX_like"/>
    <property type="match status" value="1"/>
</dbReference>
<dbReference type="FunFam" id="3.40.50.1220:FF:000008">
    <property type="entry name" value="Acetolactate synthase"/>
    <property type="match status" value="1"/>
</dbReference>
<dbReference type="FunFam" id="3.40.50.970:FF:000007">
    <property type="entry name" value="Acetolactate synthase"/>
    <property type="match status" value="1"/>
</dbReference>
<dbReference type="Gene3D" id="3.40.50.970">
    <property type="match status" value="2"/>
</dbReference>
<dbReference type="Gene3D" id="3.40.50.1220">
    <property type="entry name" value="TPP-binding domain"/>
    <property type="match status" value="1"/>
</dbReference>
<dbReference type="InterPro" id="IPR012846">
    <property type="entry name" value="Acetolactate_synth_lsu"/>
</dbReference>
<dbReference type="InterPro" id="IPR039368">
    <property type="entry name" value="AHAS_TPP"/>
</dbReference>
<dbReference type="InterPro" id="IPR029035">
    <property type="entry name" value="DHS-like_NAD/FAD-binding_dom"/>
</dbReference>
<dbReference type="InterPro" id="IPR029061">
    <property type="entry name" value="THDP-binding"/>
</dbReference>
<dbReference type="InterPro" id="IPR012000">
    <property type="entry name" value="Thiamin_PyroP_enz_cen_dom"/>
</dbReference>
<dbReference type="InterPro" id="IPR012001">
    <property type="entry name" value="Thiamin_PyroP_enz_TPP-bd_dom"/>
</dbReference>
<dbReference type="InterPro" id="IPR000399">
    <property type="entry name" value="TPP-bd_CS"/>
</dbReference>
<dbReference type="InterPro" id="IPR045229">
    <property type="entry name" value="TPP_enz"/>
</dbReference>
<dbReference type="InterPro" id="IPR011766">
    <property type="entry name" value="TPP_enzyme_TPP-bd"/>
</dbReference>
<dbReference type="NCBIfam" id="TIGR00118">
    <property type="entry name" value="acolac_lg"/>
    <property type="match status" value="1"/>
</dbReference>
<dbReference type="PANTHER" id="PTHR18968:SF13">
    <property type="entry name" value="ACETOLACTATE SYNTHASE CATALYTIC SUBUNIT, MITOCHONDRIAL"/>
    <property type="match status" value="1"/>
</dbReference>
<dbReference type="PANTHER" id="PTHR18968">
    <property type="entry name" value="THIAMINE PYROPHOSPHATE ENZYMES"/>
    <property type="match status" value="1"/>
</dbReference>
<dbReference type="Pfam" id="PF02775">
    <property type="entry name" value="TPP_enzyme_C"/>
    <property type="match status" value="1"/>
</dbReference>
<dbReference type="Pfam" id="PF00205">
    <property type="entry name" value="TPP_enzyme_M"/>
    <property type="match status" value="1"/>
</dbReference>
<dbReference type="Pfam" id="PF02776">
    <property type="entry name" value="TPP_enzyme_N"/>
    <property type="match status" value="1"/>
</dbReference>
<dbReference type="SUPFAM" id="SSF52467">
    <property type="entry name" value="DHS-like NAD/FAD-binding domain"/>
    <property type="match status" value="1"/>
</dbReference>
<dbReference type="SUPFAM" id="SSF52518">
    <property type="entry name" value="Thiamin diphosphate-binding fold (THDP-binding)"/>
    <property type="match status" value="2"/>
</dbReference>
<dbReference type="PROSITE" id="PS00187">
    <property type="entry name" value="TPP_ENZYMES"/>
    <property type="match status" value="1"/>
</dbReference>
<evidence type="ECO:0000250" key="1"/>
<evidence type="ECO:0000255" key="2"/>
<evidence type="ECO:0000256" key="3">
    <source>
        <dbReference type="SAM" id="MobiDB-lite"/>
    </source>
</evidence>
<evidence type="ECO:0000305" key="4"/>
<proteinExistence type="inferred from homology"/>
<organism>
    <name type="scientific">Cryptococcus neoformans var. neoformans serotype D (strain JEC21 / ATCC MYA-565)</name>
    <name type="common">Filobasidiella neoformans</name>
    <dbReference type="NCBI Taxonomy" id="214684"/>
    <lineage>
        <taxon>Eukaryota</taxon>
        <taxon>Fungi</taxon>
        <taxon>Dikarya</taxon>
        <taxon>Basidiomycota</taxon>
        <taxon>Agaricomycotina</taxon>
        <taxon>Tremellomycetes</taxon>
        <taxon>Tremellales</taxon>
        <taxon>Cryptococcaceae</taxon>
        <taxon>Cryptococcus</taxon>
        <taxon>Cryptococcus neoformans species complex</taxon>
    </lineage>
</organism>
<accession>Q5KPJ5</accession>
<feature type="transit peptide" description="Mitochondrion" evidence="2">
    <location>
        <begin position="1"/>
        <end status="unknown"/>
    </location>
</feature>
<feature type="chain" id="PRO_0000035661" description="Acetolactate synthase, mitochondrial">
    <location>
        <begin status="unknown"/>
        <end position="718"/>
    </location>
</feature>
<feature type="region of interest" description="Disordered" evidence="3">
    <location>
        <begin position="1"/>
        <end position="50"/>
    </location>
</feature>
<feature type="region of interest" description="Disordered" evidence="3">
    <location>
        <begin position="72"/>
        <end position="101"/>
    </location>
</feature>
<feature type="region of interest" description="Disordered" evidence="3">
    <location>
        <begin position="296"/>
        <end position="327"/>
    </location>
</feature>
<feature type="region of interest" description="Thiamine pyrophosphate binding">
    <location>
        <begin position="541"/>
        <end position="621"/>
    </location>
</feature>
<feature type="compositionally biased region" description="Polar residues" evidence="3">
    <location>
        <begin position="32"/>
        <end position="45"/>
    </location>
</feature>
<feature type="compositionally biased region" description="Low complexity" evidence="3">
    <location>
        <begin position="76"/>
        <end position="99"/>
    </location>
</feature>
<feature type="compositionally biased region" description="Low complexity" evidence="3">
    <location>
        <begin position="306"/>
        <end position="325"/>
    </location>
</feature>
<feature type="binding site" evidence="1">
    <location>
        <position position="173"/>
    </location>
    <ligand>
        <name>thiamine diphosphate</name>
        <dbReference type="ChEBI" id="CHEBI:58937"/>
    </ligand>
</feature>
<feature type="binding site" evidence="1">
    <location>
        <position position="275"/>
    </location>
    <ligand>
        <name>FAD</name>
        <dbReference type="ChEBI" id="CHEBI:57692"/>
    </ligand>
</feature>
<feature type="binding site" evidence="1">
    <location>
        <begin position="397"/>
        <end position="418"/>
    </location>
    <ligand>
        <name>FAD</name>
        <dbReference type="ChEBI" id="CHEBI:57692"/>
    </ligand>
</feature>
<feature type="binding site" evidence="1">
    <location>
        <begin position="449"/>
        <end position="468"/>
    </location>
    <ligand>
        <name>FAD</name>
        <dbReference type="ChEBI" id="CHEBI:57692"/>
    </ligand>
</feature>
<feature type="binding site" evidence="1">
    <location>
        <position position="592"/>
    </location>
    <ligand>
        <name>Mg(2+)</name>
        <dbReference type="ChEBI" id="CHEBI:18420"/>
    </ligand>
</feature>
<feature type="binding site" evidence="1">
    <location>
        <position position="619"/>
    </location>
    <ligand>
        <name>Mg(2+)</name>
        <dbReference type="ChEBI" id="CHEBI:18420"/>
    </ligand>
</feature>
<name>ILVB_CRYNJ</name>
<keyword id="KW-0028">Amino-acid biosynthesis</keyword>
<keyword id="KW-0100">Branched-chain amino acid biosynthesis</keyword>
<keyword id="KW-0274">FAD</keyword>
<keyword id="KW-0285">Flavoprotein</keyword>
<keyword id="KW-0460">Magnesium</keyword>
<keyword id="KW-0479">Metal-binding</keyword>
<keyword id="KW-0496">Mitochondrion</keyword>
<keyword id="KW-1185">Reference proteome</keyword>
<keyword id="KW-0786">Thiamine pyrophosphate</keyword>
<keyword id="KW-0808">Transferase</keyword>
<keyword id="KW-0809">Transit peptide</keyword>
<gene>
    <name type="primary">ILV2</name>
    <name type="ordered locus">CNA02570</name>
</gene>
<protein>
    <recommendedName>
        <fullName>Acetolactate synthase, mitochondrial</fullName>
        <ecNumber>2.2.1.6</ecNumber>
    </recommendedName>
    <alternativeName>
        <fullName>AHAS</fullName>
    </alternativeName>
    <alternativeName>
        <fullName>ALS</fullName>
    </alternativeName>
    <alternativeName>
        <fullName>Acetohydroxy-acid synthase</fullName>
    </alternativeName>
</protein>
<reference key="1">
    <citation type="journal article" date="2005" name="Science">
        <title>The genome of the basidiomycetous yeast and human pathogen Cryptococcus neoformans.</title>
        <authorList>
            <person name="Loftus B.J."/>
            <person name="Fung E."/>
            <person name="Roncaglia P."/>
            <person name="Rowley D."/>
            <person name="Amedeo P."/>
            <person name="Bruno D."/>
            <person name="Vamathevan J."/>
            <person name="Miranda M."/>
            <person name="Anderson I.J."/>
            <person name="Fraser J.A."/>
            <person name="Allen J.E."/>
            <person name="Bosdet I.E."/>
            <person name="Brent M.R."/>
            <person name="Chiu R."/>
            <person name="Doering T.L."/>
            <person name="Donlin M.J."/>
            <person name="D'Souza C.A."/>
            <person name="Fox D.S."/>
            <person name="Grinberg V."/>
            <person name="Fu J."/>
            <person name="Fukushima M."/>
            <person name="Haas B.J."/>
            <person name="Huang J.C."/>
            <person name="Janbon G."/>
            <person name="Jones S.J.M."/>
            <person name="Koo H.L."/>
            <person name="Krzywinski M.I."/>
            <person name="Kwon-Chung K.J."/>
            <person name="Lengeler K.B."/>
            <person name="Maiti R."/>
            <person name="Marra M.A."/>
            <person name="Marra R.E."/>
            <person name="Mathewson C.A."/>
            <person name="Mitchell T.G."/>
            <person name="Pertea M."/>
            <person name="Riggs F.R."/>
            <person name="Salzberg S.L."/>
            <person name="Schein J.E."/>
            <person name="Shvartsbeyn A."/>
            <person name="Shin H."/>
            <person name="Shumway M."/>
            <person name="Specht C.A."/>
            <person name="Suh B.B."/>
            <person name="Tenney A."/>
            <person name="Utterback T.R."/>
            <person name="Wickes B.L."/>
            <person name="Wortman J.R."/>
            <person name="Wye N.H."/>
            <person name="Kronstad J.W."/>
            <person name="Lodge J.K."/>
            <person name="Heitman J."/>
            <person name="Davis R.W."/>
            <person name="Fraser C.M."/>
            <person name="Hyman R.W."/>
        </authorList>
    </citation>
    <scope>NUCLEOTIDE SEQUENCE [LARGE SCALE GENOMIC DNA]</scope>
    <source>
        <strain>JEC21 / ATCC MYA-565</strain>
    </source>
</reference>
<comment type="catalytic activity">
    <reaction>
        <text>2 pyruvate + H(+) = (2S)-2-acetolactate + CO2</text>
        <dbReference type="Rhea" id="RHEA:25249"/>
        <dbReference type="ChEBI" id="CHEBI:15361"/>
        <dbReference type="ChEBI" id="CHEBI:15378"/>
        <dbReference type="ChEBI" id="CHEBI:16526"/>
        <dbReference type="ChEBI" id="CHEBI:58476"/>
        <dbReference type="EC" id="2.2.1.6"/>
    </reaction>
</comment>
<comment type="cofactor">
    <cofactor evidence="1">
        <name>Mg(2+)</name>
        <dbReference type="ChEBI" id="CHEBI:18420"/>
    </cofactor>
    <text evidence="1">Binds 1 Mg(2+) ion per subunit.</text>
</comment>
<comment type="cofactor">
    <cofactor evidence="1">
        <name>thiamine diphosphate</name>
        <dbReference type="ChEBI" id="CHEBI:58937"/>
    </cofactor>
    <text evidence="1">Binds 1 thiamine pyrophosphate per subunit.</text>
</comment>
<comment type="pathway">
    <text>Amino-acid biosynthesis; L-isoleucine biosynthesis; L-isoleucine from 2-oxobutanoate: step 1/4.</text>
</comment>
<comment type="pathway">
    <text>Amino-acid biosynthesis; L-valine biosynthesis; L-valine from pyruvate: step 1/4.</text>
</comment>
<comment type="subcellular location">
    <subcellularLocation>
        <location evidence="1">Mitochondrion</location>
    </subcellularLocation>
</comment>
<comment type="similarity">
    <text evidence="4">Belongs to the TPP enzyme family.</text>
</comment>
<sequence length="718" mass="78381">MLTRQSRLLRRIPPPNAVLQSGLQRRHRSTDRYSNNIHTSSTQNAPAPVYDAPIREKGMTIEAKERVRAHARKIQSSASTAAASPAVRPQPAQHFQAAPQPMPANTPRFESDGQVKNGLDYSFIGLSGGQIFQEMMLRHDVKQVFGYPGGAILPVFDAIYNSPHFDFVLPRHEQGAGHMAEGYARVSGKPGVVLVTSGPGATNVITPMQDALSDGVPMVVFCGQVATNLIGSDAFQEADVVGISRSCTKWNVMVKDIAELPRRINEAFKIATTGRPGPVLVDLPKDVTAAILRTPIPAKSAQPGHSPYLPSNPLNPSSQPSDPLPGDADLITEAAQMINKAKRPIIFAGNGVLSSPEGPKLLKELSDKGRIPVTTTLQGLGAFDERDEKSLHMIGMHGSAYANFAMQEADVLIALGVRFDDRVTGKVDTFAPAAKAAAAEGRGGIIHFEIQPKNINKIVEAQIPVLGDVVASLAELVPQIEAVDRSAWIGRCKATKERYPFTYTPSQEGQKLKPQEVVQELDRQAEALGKEKFIISTGVGQHQMWACQYYRWTEPRSWVSSGGLGTMGFGLPSAIGAKVAAPEKYVIDIDGDASFSMTAMELATASQYDIGVKVLLFNNEFQGMVEQWQDLFYENRYSHTRMTNPDFVKLSESMGTKGLRCTKLEDLPRMMKEFLEYDGKRPIVLECLVSSEHVYPMIPAGKALHEQLLHPLLRNGSE</sequence>